<keyword id="KW-0002">3D-structure</keyword>
<keyword id="KW-0134">Cell wall</keyword>
<keyword id="KW-0963">Cytoplasm</keyword>
<keyword id="KW-0274">FAD</keyword>
<keyword id="KW-0285">Flavoprotein</keyword>
<keyword id="KW-0325">Glycoprotein</keyword>
<keyword id="KW-0560">Oxidoreductase</keyword>
<keyword id="KW-1185">Reference proteome</keyword>
<keyword id="KW-0964">Secreted</keyword>
<keyword id="KW-0732">Signal</keyword>
<keyword id="KW-0926">Vacuole</keyword>
<proteinExistence type="evidence at protein level"/>
<evidence type="ECO:0000250" key="1">
    <source>
        <dbReference type="UniProtKB" id="E4QP00"/>
    </source>
</evidence>
<evidence type="ECO:0000255" key="2"/>
<evidence type="ECO:0000255" key="3">
    <source>
        <dbReference type="PROSITE-ProRule" id="PRU00498"/>
    </source>
</evidence>
<evidence type="ECO:0000269" key="4">
    <source>
    </source>
</evidence>
<evidence type="ECO:0000269" key="5">
    <source>
    </source>
</evidence>
<evidence type="ECO:0000269" key="6">
    <source>
    </source>
</evidence>
<evidence type="ECO:0000269" key="7">
    <source>
    </source>
</evidence>
<evidence type="ECO:0000269" key="8">
    <source>
    </source>
</evidence>
<evidence type="ECO:0000269" key="9">
    <source>
    </source>
</evidence>
<evidence type="ECO:0000269" key="10">
    <source>
    </source>
</evidence>
<evidence type="ECO:0000269" key="11">
    <source>
    </source>
</evidence>
<evidence type="ECO:0000303" key="12">
    <source>
    </source>
</evidence>
<evidence type="ECO:0000303" key="13">
    <source>
    </source>
</evidence>
<evidence type="ECO:0000305" key="14"/>
<evidence type="ECO:0000305" key="15">
    <source>
    </source>
</evidence>
<evidence type="ECO:0007829" key="16">
    <source>
        <dbReference type="PDB" id="8BXL"/>
    </source>
</evidence>
<gene>
    <name evidence="12" type="primary">patE</name>
    <name type="ORF">PEX2_082770</name>
</gene>
<organism>
    <name type="scientific">Penicillium expansum</name>
    <name type="common">Blue mold rot fungus</name>
    <dbReference type="NCBI Taxonomy" id="27334"/>
    <lineage>
        <taxon>Eukaryota</taxon>
        <taxon>Fungi</taxon>
        <taxon>Dikarya</taxon>
        <taxon>Ascomycota</taxon>
        <taxon>Pezizomycotina</taxon>
        <taxon>Eurotiomycetes</taxon>
        <taxon>Eurotiomycetidae</taxon>
        <taxon>Eurotiales</taxon>
        <taxon>Aspergillaceae</taxon>
        <taxon>Penicillium</taxon>
    </lineage>
</organism>
<accession>A0A075TRK9</accession>
<name>PATE_PENEN</name>
<protein>
    <recommendedName>
        <fullName evidence="13">Patulin synthase</fullName>
        <ecNumber evidence="11">1.1.-.-</ecNumber>
    </recommendedName>
    <alternativeName>
        <fullName evidence="12">Dehydrogenase patE</fullName>
    </alternativeName>
    <alternativeName>
        <fullName evidence="12">Patulin biosynthesis cluster protein E</fullName>
    </alternativeName>
</protein>
<sequence>MRLTSGIFHAAIAVAAVGAVLPEGPSSSKTHRNEYARRMLGSSFGIPKNQTFDYLVIGGGTAGLTIATRLAEQGVGSVAVIEAGGFYELNNGNLSQIPAQDAFYVGTDLDDWQPGIDWGFHTTPQAGAYDRVSHYARGKCLGGSSARNYMAYQRGTKAAHQRWADTVGDSSYTWEQFLPFFEKSLHFTPANDALRGANASVVSDPSVLGNGDGPLSVTYPHYAQAFATWAKHAFIEIGLQIRSGFQSGALLGQSYGLYTINATTMHRESSETSFLRKGLADPNLTVFQSALAKRIRFQDKRAVGVDVETMGRAYTLSARKEIVLSAGAFQSPQLLMVSGVGPAATLKAHNIPLVADRPGVGQNMQDHIIYAPSYRVNVITQSALLNEEFEAQANRDYNERAAGIYANPTSDILAWEKIPEPKRSAWFSNHTRQVLAEYPDDWPEVEFLTMGGYFGYQRNYIRDNPSDGYNYASLAVSLCTPRSRGNVTITSPDAGVPPVINPNWLTDPVDVELAVAAFKRTRDFFNTTAIKPILIGPEYFPGSQVATDAEILDHVRKSFDTIFHASCTCAMGLANDTQAVVDSKARVIGVEALRVVDASALPFLPPGHPQSTLYALAEKIACEISGNC</sequence>
<dbReference type="EC" id="1.1.-.-" evidence="11"/>
<dbReference type="EMBL" id="KF899892">
    <property type="protein sequence ID" value="AIG62134.1"/>
    <property type="molecule type" value="Genomic_DNA"/>
</dbReference>
<dbReference type="EMBL" id="JQFZ01000262">
    <property type="protein sequence ID" value="KGO52630.1"/>
    <property type="molecule type" value="Genomic_DNA"/>
</dbReference>
<dbReference type="RefSeq" id="XP_016595360.1">
    <property type="nucleotide sequence ID" value="XM_016745547.1"/>
</dbReference>
<dbReference type="PDB" id="8BXL">
    <property type="method" value="X-ray"/>
    <property type="resolution" value="2.40 A"/>
    <property type="chains" value="A/B/C/D/E/F=1-628"/>
</dbReference>
<dbReference type="PDBsum" id="8BXL"/>
<dbReference type="SMR" id="A0A075TRK9"/>
<dbReference type="STRING" id="27334.A0A075TRK9"/>
<dbReference type="GlyCosmos" id="A0A075TRK9">
    <property type="glycosylation" value="9 sites, No reported glycans"/>
</dbReference>
<dbReference type="GeneID" id="27680967"/>
<dbReference type="VEuPathDB" id="FungiDB:PEXP_094350"/>
<dbReference type="HOGENOM" id="CLU_002865_6_3_1"/>
<dbReference type="OrthoDB" id="269227at2759"/>
<dbReference type="PhylomeDB" id="A0A075TRK9"/>
<dbReference type="BioCyc" id="MetaCyc:MONOMER-20873"/>
<dbReference type="UniPathway" id="UPA00918"/>
<dbReference type="Proteomes" id="UP000030143">
    <property type="component" value="Unassembled WGS sequence"/>
</dbReference>
<dbReference type="GO" id="GO:0005938">
    <property type="term" value="C:cell cortex"/>
    <property type="evidence" value="ECO:0007669"/>
    <property type="project" value="UniProtKB-SubCell"/>
</dbReference>
<dbReference type="GO" id="GO:0031012">
    <property type="term" value="C:extracellular matrix"/>
    <property type="evidence" value="ECO:0000314"/>
    <property type="project" value="GO_Central"/>
</dbReference>
<dbReference type="GO" id="GO:0005576">
    <property type="term" value="C:extracellular region"/>
    <property type="evidence" value="ECO:0000314"/>
    <property type="project" value="UniProt"/>
</dbReference>
<dbReference type="GO" id="GO:0005773">
    <property type="term" value="C:vacuole"/>
    <property type="evidence" value="ECO:0007669"/>
    <property type="project" value="UniProtKB-SubCell"/>
</dbReference>
<dbReference type="GO" id="GO:0050660">
    <property type="term" value="F:flavin adenine dinucleotide binding"/>
    <property type="evidence" value="ECO:0007669"/>
    <property type="project" value="InterPro"/>
</dbReference>
<dbReference type="GO" id="GO:0016491">
    <property type="term" value="F:oxidoreductase activity"/>
    <property type="evidence" value="ECO:0000314"/>
    <property type="project" value="GO_Central"/>
</dbReference>
<dbReference type="GO" id="GO:0016614">
    <property type="term" value="F:oxidoreductase activity, acting on CH-OH group of donors"/>
    <property type="evidence" value="ECO:0007669"/>
    <property type="project" value="InterPro"/>
</dbReference>
<dbReference type="GO" id="GO:0016218">
    <property type="term" value="F:polyketide synthase activity"/>
    <property type="evidence" value="ECO:0000314"/>
    <property type="project" value="UniProt"/>
</dbReference>
<dbReference type="GO" id="GO:0140723">
    <property type="term" value="P:patulin biosynthetic process"/>
    <property type="evidence" value="ECO:0000314"/>
    <property type="project" value="GO_Central"/>
</dbReference>
<dbReference type="Gene3D" id="3.50.50.60">
    <property type="entry name" value="FAD/NAD(P)-binding domain"/>
    <property type="match status" value="1"/>
</dbReference>
<dbReference type="Gene3D" id="3.30.560.10">
    <property type="entry name" value="Glucose Oxidase, domain 3"/>
    <property type="match status" value="1"/>
</dbReference>
<dbReference type="InterPro" id="IPR036188">
    <property type="entry name" value="FAD/NAD-bd_sf"/>
</dbReference>
<dbReference type="InterPro" id="IPR012132">
    <property type="entry name" value="GMC_OxRdtase"/>
</dbReference>
<dbReference type="InterPro" id="IPR000172">
    <property type="entry name" value="GMC_OxRdtase_N"/>
</dbReference>
<dbReference type="InterPro" id="IPR007867">
    <property type="entry name" value="GMC_OxRtase_C"/>
</dbReference>
<dbReference type="PANTHER" id="PTHR11552:SF138">
    <property type="entry name" value="DEHYDROGENASE PKFF-RELATED"/>
    <property type="match status" value="1"/>
</dbReference>
<dbReference type="PANTHER" id="PTHR11552">
    <property type="entry name" value="GLUCOSE-METHANOL-CHOLINE GMC OXIDOREDUCTASE"/>
    <property type="match status" value="1"/>
</dbReference>
<dbReference type="Pfam" id="PF05199">
    <property type="entry name" value="GMC_oxred_C"/>
    <property type="match status" value="1"/>
</dbReference>
<dbReference type="Pfam" id="PF00732">
    <property type="entry name" value="GMC_oxred_N"/>
    <property type="match status" value="1"/>
</dbReference>
<dbReference type="PIRSF" id="PIRSF000137">
    <property type="entry name" value="Alcohol_oxidase"/>
    <property type="match status" value="1"/>
</dbReference>
<dbReference type="SUPFAM" id="SSF54373">
    <property type="entry name" value="FAD-linked reductases, C-terminal domain"/>
    <property type="match status" value="1"/>
</dbReference>
<dbReference type="SUPFAM" id="SSF51905">
    <property type="entry name" value="FAD/NAD(P)-binding domain"/>
    <property type="match status" value="1"/>
</dbReference>
<dbReference type="PROSITE" id="PS00624">
    <property type="entry name" value="GMC_OXRED_2"/>
    <property type="match status" value="1"/>
</dbReference>
<reference key="1">
    <citation type="journal article" date="2014" name="Int. J. Food Microbiol.">
        <title>Sequencing, physical organization and kinetic expression of the patulin biosynthetic gene cluster from Penicillium expansum.</title>
        <authorList>
            <person name="Tannous J."/>
            <person name="El Khoury R."/>
            <person name="Snini S.P."/>
            <person name="Lippi Y."/>
            <person name="El Khoury A."/>
            <person name="Atoui A."/>
            <person name="Lteif R."/>
            <person name="Oswald I.P."/>
            <person name="Puel O."/>
        </authorList>
    </citation>
    <scope>NUCLEOTIDE SEQUENCE [GENOMIC DNA]</scope>
    <scope>IDENTIFICATION</scope>
    <scope>INDUCTION</scope>
    <source>
        <strain>NRRL 35695</strain>
    </source>
</reference>
<reference key="2">
    <citation type="journal article" date="2015" name="Mol. Plant Microbe Interact.">
        <title>Genome, transcriptome, and functional analyses of Penicillium expansum provide new insights into secondary metabolism and pathogenicity.</title>
        <authorList>
            <person name="Ballester A.R."/>
            <person name="Marcet-Houben M."/>
            <person name="Levin E."/>
            <person name="Sela N."/>
            <person name="Selma-Lazaro C."/>
            <person name="Carmona L."/>
            <person name="Wisniewski M."/>
            <person name="Droby S."/>
            <person name="Gonzalez-Candelas L."/>
            <person name="Gabaldon T."/>
        </authorList>
    </citation>
    <scope>NUCLEOTIDE SEQUENCE [LARGE SCALE GENOMIC DNA]</scope>
    <source>
        <strain>MD-8</strain>
    </source>
</reference>
<reference key="3">
    <citation type="journal article" date="2004" name="Int. J. Epidemiol.">
        <title>Clinical trial of patulin in the common cold. 1944.</title>
        <authorList>
            <consortium name="Patulin Clinical Trials Committee, Medical Research Council"/>
        </authorList>
    </citation>
    <scope>BIOTECHNOLOGY</scope>
</reference>
<reference key="4">
    <citation type="journal article" date="2012" name="Food Chem. Toxicol.">
        <title>DNA damage in organs of mice treated acutely with patulin, a known mycotoxin.</title>
        <authorList>
            <person name="de Melo F.T."/>
            <person name="de Oliveira I.M."/>
            <person name="Greggio S."/>
            <person name="Dacosta J.C."/>
            <person name="Guecheva T.N."/>
            <person name="Saffi J."/>
            <person name="Henriques J.A."/>
            <person name="Rosa R.M."/>
        </authorList>
    </citation>
    <scope>BIOTECHNOLOGY</scope>
</reference>
<reference key="5">
    <citation type="journal article" date="2016" name="Tumor Biol.">
        <title>The potential effect of patulin on mice bearing melanoma cells: an anti-tumour or carcinogenic effect?</title>
        <authorList>
            <person name="Boussabbeh M."/>
            <person name="Ben Salem I."/>
            <person name="Rjiba-Touati K."/>
            <person name="Bouyahya C."/>
            <person name="Neffati F."/>
            <person name="Najjar M.F."/>
            <person name="Bacha H."/>
            <person name="Abid-Essefi S."/>
        </authorList>
    </citation>
    <scope>BIOTECHNOLOGY</scope>
</reference>
<reference key="6">
    <citation type="journal article" date="2017" name="Mol. Plant Pathol.">
        <title>LaeA regulation of secondary metabolism modulates virulence in Penicillium expansum and is mediated by sucrose.</title>
        <authorList>
            <person name="Kumar D."/>
            <person name="Barad S."/>
            <person name="Chen Y."/>
            <person name="Luo X."/>
            <person name="Tannous J."/>
            <person name="Dubey A."/>
            <person name="Glam Matana N."/>
            <person name="Tian S."/>
            <person name="Li B."/>
            <person name="Keller N."/>
            <person name="Prusky D."/>
        </authorList>
    </citation>
    <scope>INDUCTION</scope>
</reference>
<reference key="7">
    <citation type="journal article" date="2018" name="Front. Plant Sci.">
        <title>Apple intrinsic factors modulating the global regulator, LaeA, the patulin gene cluster and patulin accumulation during fruit colonization by Penicillium expansum.</title>
        <authorList>
            <person name="Kumar D."/>
            <person name="Tannous J."/>
            <person name="Sionov E."/>
            <person name="Keller N."/>
            <person name="Prusky D."/>
        </authorList>
    </citation>
    <scope>FUNCTION</scope>
    <scope>INDUCTION</scope>
</reference>
<reference key="8">
    <citation type="journal article" date="2015" name="Mol. Plant Microbe Interact.">
        <title>Genomic characterization reveals insights into patulin biosynthesis and pathogenicity in Penicillium species.</title>
        <authorList>
            <person name="Li B."/>
            <person name="Zong Y."/>
            <person name="Du Z."/>
            <person name="Chen Y."/>
            <person name="Zhang Z."/>
            <person name="Qin G."/>
            <person name="Zhao W."/>
            <person name="Tian S."/>
        </authorList>
    </citation>
    <scope>FUNCTION</scope>
    <scope>INDUCTION</scope>
</reference>
<reference key="9">
    <citation type="journal article" date="2019" name="Environ. Microbiol.">
        <title>Dissection of patulin biosynthesis, spatial control and regulation mechanism in Penicillium expansum.</title>
        <authorList>
            <person name="Li B."/>
            <person name="Chen Y."/>
            <person name="Zong Y."/>
            <person name="Shang Y."/>
            <person name="Zhang Z."/>
            <person name="Xu X."/>
            <person name="Wang X."/>
            <person name="Long M."/>
            <person name="Tian S."/>
        </authorList>
    </citation>
    <scope>FUNCTION</scope>
    <scope>DISRUPTION PHENOTYPE</scope>
    <scope>SUBCELLULAR LOCATION</scope>
    <scope>CATALYTIC ACTIVITY</scope>
    <scope>INDUCTION</scope>
    <scope>PATHWAY</scope>
</reference>
<comment type="function">
    <text evidence="7 10 11 15">Patulin synthase; part of the gene cluster that mediates the biosynthesis of patulin, an acetate-derived tetraketide mycotoxin produced by several fungal species that shows antimicrobial properties against several bacteria (PubMed:25625822, PubMed:30100914, PubMed:30680886). PatE catalyzes the last step of the pathway which is the conversion of E-ascladiol to patulin (PubMed:30680886). The pathway begins with the synthesis of 6-methylsalicylic acid by the polyketide synthase (PKS) patK via condensation of acetate and malonate units. The 6-methylsalicylic acid decarboxylase patG then catalyzes the decarboxylation of 6-methylsalicylic acid to yield m-cresol (also known as 3-methylphenol). These first reactions occur in the cytosol. The intermediate m-cresol is then transported into the endoplasmic reticulum where the cytochrome P450 monooxygenase patH converts it to m-hydroxybenzyl alcohol, which is further converted to gentisyl alcohol by the cytochrome P450 monooxygenase patI. The oxidoreductases patJ and patO further convert gentisyl alcohol to isoepoxydon in the vacuole. PatN catalyzes then the transformation of isoepoxydon into phyllostine. The cluster protein patF is responsible for the conversion from phyllostine to neopatulin whereas the alcohol dehydrogenase patD converts neopatulin to E-ascladiol. The steps between isoepoxydon and E-ascladiol occur in the cytosol, and E-ascladiol is probably secreted to the extracellular space by one of the cluster-specific transporters patC or patM. Finally, the secreted patulin synthase patE catalyzes the conversion of E-ascladiol to patulin (Probable) (PubMed:30680886).</text>
</comment>
<comment type="catalytic activity">
    <reaction evidence="11">
        <text>(E)-ascladiol + A = patulin + AH2</text>
        <dbReference type="Rhea" id="RHEA:62228"/>
        <dbReference type="ChEBI" id="CHEBI:13193"/>
        <dbReference type="ChEBI" id="CHEBI:17499"/>
        <dbReference type="ChEBI" id="CHEBI:74926"/>
        <dbReference type="ChEBI" id="CHEBI:145112"/>
    </reaction>
    <physiologicalReaction direction="left-to-right" evidence="11">
        <dbReference type="Rhea" id="RHEA:62229"/>
    </physiologicalReaction>
</comment>
<comment type="cofactor">
    <cofactor evidence="1">
        <name>FAD</name>
        <dbReference type="ChEBI" id="CHEBI:57692"/>
    </cofactor>
</comment>
<comment type="pathway">
    <text evidence="11">Mycotoxin biosynthesis; patulin biosynthesis.</text>
</comment>
<comment type="subcellular location">
    <subcellularLocation>
        <location evidence="11">Cytoplasm</location>
        <location evidence="11">Cell cortex</location>
    </subcellularLocation>
    <subcellularLocation>
        <location evidence="11">Vacuole</location>
    </subcellularLocation>
    <subcellularLocation>
        <location evidence="11">Secreted</location>
    </subcellularLocation>
    <subcellularLocation>
        <location evidence="11">Secreted</location>
        <location evidence="11">Cell wall</location>
    </subcellularLocation>
</comment>
<comment type="induction">
    <text evidence="6 7 9 10 11">Expression is correlated with the production of patulin (PubMed:25120234). Expression is positively regulated by the secondary metabolism regulator laeA (PubMed:27528575, PubMed:30100914). Expression is strongly decreased with increased sucrose concentrations. This decrease is lost in the presence of malic acid (PubMed:30100914). Expression is increased with pH changes from 2.5 to 3.5 in the presence of a limiting concentration of sucrose, 50 mM (PubMed:30100914). Natural phenols present in apple fruits such as chlorogenic acid or the flavonoid epicatechin modulate patulin biosynthesis. They increase expression in the absence of sucrose, have little impact in the presence of 15 mM sucrose, and decrease expression in 175 mM sucrose (PubMed:30100914). Expression is positively regulated by the patulin cluster-specific transcription factor patL (PubMed:25625822). Finally, expression is also positively regulated by the velvet family proteins transcription regulators veA, velB, velC, but not vosA (PubMed:30680886).</text>
</comment>
<comment type="disruption phenotype">
    <text evidence="11">Completely abolishes the production of patulin.</text>
</comment>
<comment type="biotechnology">
    <text evidence="4 5 8">Patulin was originally used as an antibiotic and specifically trialed to be used against the common cold, but it is no longer used for that purpose since it has been shown to induce immunological, neurological and gastrointestinal effects (PubMed:15082620). Genotoxic effects of patulin with dose-dependent increase in DNA strand breaks in brain, liver and kidneys have been detected in mice (PubMed:22222931). However, more recently, it has been proposed that patulin might also have anti-tumor properties (PubMed:26619846).</text>
</comment>
<comment type="similarity">
    <text evidence="14">Belongs to the GMC oxidoreductase family.</text>
</comment>
<feature type="signal peptide" evidence="2">
    <location>
        <begin position="1"/>
        <end position="19"/>
    </location>
</feature>
<feature type="chain" id="PRO_5009375380" description="Patulin synthase" evidence="2">
    <location>
        <begin position="20"/>
        <end position="628"/>
    </location>
</feature>
<feature type="active site" description="Proton acceptor" evidence="1">
    <location>
        <position position="564"/>
    </location>
</feature>
<feature type="binding site" evidence="1">
    <location>
        <begin position="61"/>
        <end position="62"/>
    </location>
    <ligand>
        <name>FAD</name>
        <dbReference type="ChEBI" id="CHEBI:57692"/>
    </ligand>
</feature>
<feature type="binding site" evidence="1">
    <location>
        <begin position="82"/>
        <end position="83"/>
    </location>
    <ligand>
        <name>FAD</name>
        <dbReference type="ChEBI" id="CHEBI:57692"/>
    </ligand>
</feature>
<feature type="binding site" evidence="1">
    <location>
        <begin position="148"/>
        <end position="151"/>
    </location>
    <ligand>
        <name>FAD</name>
        <dbReference type="ChEBI" id="CHEBI:57692"/>
    </ligand>
</feature>
<feature type="binding site" evidence="1">
    <location>
        <position position="598"/>
    </location>
    <ligand>
        <name>FAD</name>
        <dbReference type="ChEBI" id="CHEBI:57692"/>
    </ligand>
</feature>
<feature type="binding site" evidence="1">
    <location>
        <begin position="609"/>
        <end position="610"/>
    </location>
    <ligand>
        <name>FAD</name>
        <dbReference type="ChEBI" id="CHEBI:57692"/>
    </ligand>
</feature>
<feature type="glycosylation site" description="N-linked (GlcNAc...) asparagine" evidence="3">
    <location>
        <position position="49"/>
    </location>
</feature>
<feature type="glycosylation site" description="N-linked (GlcNAc...) asparagine" evidence="3">
    <location>
        <position position="93"/>
    </location>
</feature>
<feature type="glycosylation site" description="N-linked (GlcNAc...) asparagine" evidence="3">
    <location>
        <position position="198"/>
    </location>
</feature>
<feature type="glycosylation site" description="N-linked (GlcNAc...) asparagine" evidence="3">
    <location>
        <position position="261"/>
    </location>
</feature>
<feature type="glycosylation site" description="N-linked (GlcNAc...) asparagine" evidence="3">
    <location>
        <position position="283"/>
    </location>
</feature>
<feature type="glycosylation site" description="N-linked (GlcNAc...) asparagine" evidence="3">
    <location>
        <position position="429"/>
    </location>
</feature>
<feature type="glycosylation site" description="N-linked (GlcNAc...) asparagine" evidence="3">
    <location>
        <position position="486"/>
    </location>
</feature>
<feature type="glycosylation site" description="N-linked (GlcNAc...) asparagine" evidence="3">
    <location>
        <position position="526"/>
    </location>
</feature>
<feature type="glycosylation site" description="N-linked (GlcNAc...) asparagine" evidence="3">
    <location>
        <position position="575"/>
    </location>
</feature>
<feature type="helix" evidence="16">
    <location>
        <begin position="40"/>
        <end position="43"/>
    </location>
</feature>
<feature type="strand" evidence="16">
    <location>
        <begin position="50"/>
        <end position="57"/>
    </location>
</feature>
<feature type="helix" evidence="16">
    <location>
        <begin position="61"/>
        <end position="72"/>
    </location>
</feature>
<feature type="strand" evidence="16">
    <location>
        <begin position="78"/>
        <end position="81"/>
    </location>
</feature>
<feature type="helix" evidence="16">
    <location>
        <begin position="87"/>
        <end position="90"/>
    </location>
</feature>
<feature type="turn" evidence="16">
    <location>
        <begin position="92"/>
        <end position="96"/>
    </location>
</feature>
<feature type="helix" evidence="16">
    <location>
        <begin position="98"/>
        <end position="100"/>
    </location>
</feature>
<feature type="turn" evidence="16">
    <location>
        <begin position="101"/>
        <end position="104"/>
    </location>
</feature>
<feature type="strand" evidence="16">
    <location>
        <begin position="106"/>
        <end position="108"/>
    </location>
</feature>
<feature type="turn" evidence="16">
    <location>
        <begin position="114"/>
        <end position="116"/>
    </location>
</feature>
<feature type="helix" evidence="16">
    <location>
        <begin position="126"/>
        <end position="128"/>
    </location>
</feature>
<feature type="helix" evidence="16">
    <location>
        <begin position="143"/>
        <end position="146"/>
    </location>
</feature>
<feature type="helix" evidence="16">
    <location>
        <begin position="157"/>
        <end position="167"/>
    </location>
</feature>
<feature type="helix" evidence="16">
    <location>
        <begin position="170"/>
        <end position="172"/>
    </location>
</feature>
<feature type="helix" evidence="16">
    <location>
        <begin position="174"/>
        <end position="183"/>
    </location>
</feature>
<feature type="strand" evidence="16">
    <location>
        <begin position="185"/>
        <end position="187"/>
    </location>
</feature>
<feature type="helix" evidence="16">
    <location>
        <begin position="192"/>
        <end position="195"/>
    </location>
</feature>
<feature type="helix" evidence="16">
    <location>
        <begin position="197"/>
        <end position="199"/>
    </location>
</feature>
<feature type="helix" evidence="16">
    <location>
        <begin position="205"/>
        <end position="207"/>
    </location>
</feature>
<feature type="strand" evidence="16">
    <location>
        <begin position="213"/>
        <end position="218"/>
    </location>
</feature>
<feature type="helix" evidence="16">
    <location>
        <begin position="225"/>
        <end position="236"/>
    </location>
</feature>
<feature type="strand" evidence="16">
    <location>
        <begin position="245"/>
        <end position="248"/>
    </location>
</feature>
<feature type="strand" evidence="16">
    <location>
        <begin position="251"/>
        <end position="255"/>
    </location>
</feature>
<feature type="strand" evidence="16">
    <location>
        <begin position="257"/>
        <end position="260"/>
    </location>
</feature>
<feature type="turn" evidence="16">
    <location>
        <begin position="262"/>
        <end position="264"/>
    </location>
</feature>
<feature type="turn" evidence="16">
    <location>
        <begin position="270"/>
        <end position="273"/>
    </location>
</feature>
<feature type="helix" evidence="16">
    <location>
        <begin position="274"/>
        <end position="278"/>
    </location>
</feature>
<feature type="strand" evidence="16">
    <location>
        <begin position="284"/>
        <end position="287"/>
    </location>
</feature>
<feature type="strand" evidence="16">
    <location>
        <begin position="289"/>
        <end position="298"/>
    </location>
</feature>
<feature type="strand" evidence="16">
    <location>
        <begin position="301"/>
        <end position="309"/>
    </location>
</feature>
<feature type="strand" evidence="16">
    <location>
        <begin position="312"/>
        <end position="324"/>
    </location>
</feature>
<feature type="helix" evidence="16">
    <location>
        <begin position="327"/>
        <end position="337"/>
    </location>
</feature>
<feature type="helix" evidence="16">
    <location>
        <begin position="343"/>
        <end position="348"/>
    </location>
</feature>
<feature type="strand" evidence="16">
    <location>
        <begin position="354"/>
        <end position="356"/>
    </location>
</feature>
<feature type="turn" evidence="16">
    <location>
        <begin position="358"/>
        <end position="361"/>
    </location>
</feature>
<feature type="strand" evidence="16">
    <location>
        <begin position="363"/>
        <end position="365"/>
    </location>
</feature>
<feature type="strand" evidence="16">
    <location>
        <begin position="368"/>
        <end position="370"/>
    </location>
</feature>
<feature type="strand" evidence="16">
    <location>
        <begin position="373"/>
        <end position="378"/>
    </location>
</feature>
<feature type="helix" evidence="16">
    <location>
        <begin position="381"/>
        <end position="385"/>
    </location>
</feature>
<feature type="helix" evidence="16">
    <location>
        <begin position="387"/>
        <end position="400"/>
    </location>
</feature>
<feature type="helix" evidence="16">
    <location>
        <begin position="404"/>
        <end position="406"/>
    </location>
</feature>
<feature type="strand" evidence="16">
    <location>
        <begin position="412"/>
        <end position="416"/>
    </location>
</feature>
<feature type="helix" evidence="16">
    <location>
        <begin position="422"/>
        <end position="426"/>
    </location>
</feature>
<feature type="helix" evidence="16">
    <location>
        <begin position="429"/>
        <end position="435"/>
    </location>
</feature>
<feature type="strand" evidence="16">
    <location>
        <begin position="444"/>
        <end position="452"/>
    </location>
</feature>
<feature type="turn" evidence="16">
    <location>
        <begin position="460"/>
        <end position="463"/>
    </location>
</feature>
<feature type="strand" evidence="16">
    <location>
        <begin position="470"/>
        <end position="480"/>
    </location>
</feature>
<feature type="strand" evidence="16">
    <location>
        <begin position="485"/>
        <end position="488"/>
    </location>
</feature>
<feature type="strand" evidence="16">
    <location>
        <begin position="490"/>
        <end position="492"/>
    </location>
</feature>
<feature type="strand" evidence="16">
    <location>
        <begin position="499"/>
        <end position="501"/>
    </location>
</feature>
<feature type="helix" evidence="16">
    <location>
        <begin position="508"/>
        <end position="525"/>
    </location>
</feature>
<feature type="turn" evidence="16">
    <location>
        <begin position="528"/>
        <end position="530"/>
    </location>
</feature>
<feature type="helix" evidence="16">
    <location>
        <begin position="531"/>
        <end position="533"/>
    </location>
</feature>
<feature type="strand" evidence="16">
    <location>
        <begin position="534"/>
        <end position="541"/>
    </location>
</feature>
<feature type="helix" evidence="16">
    <location>
        <begin position="548"/>
        <end position="558"/>
    </location>
</feature>
<feature type="strand" evidence="16">
    <location>
        <begin position="590"/>
        <end position="595"/>
    </location>
</feature>
<feature type="helix" evidence="16">
    <location>
        <begin position="598"/>
        <end position="600"/>
    </location>
</feature>
<feature type="helix" evidence="16">
    <location>
        <begin position="610"/>
        <end position="625"/>
    </location>
</feature>